<dbReference type="EC" id="4.2.1.19" evidence="1"/>
<dbReference type="EMBL" id="BX572593">
    <property type="protein sequence ID" value="CAE25753.1"/>
    <property type="molecule type" value="Genomic_DNA"/>
</dbReference>
<dbReference type="RefSeq" id="WP_011155877.1">
    <property type="nucleotide sequence ID" value="NZ_CP116810.1"/>
</dbReference>
<dbReference type="SMR" id="P60887"/>
<dbReference type="STRING" id="258594.RPA0309"/>
<dbReference type="GeneID" id="66891319"/>
<dbReference type="eggNOG" id="COG0131">
    <property type="taxonomic scope" value="Bacteria"/>
</dbReference>
<dbReference type="HOGENOM" id="CLU_044308_2_0_5"/>
<dbReference type="PhylomeDB" id="P60887"/>
<dbReference type="UniPathway" id="UPA00031">
    <property type="reaction ID" value="UER00011"/>
</dbReference>
<dbReference type="GO" id="GO:0005737">
    <property type="term" value="C:cytoplasm"/>
    <property type="evidence" value="ECO:0007669"/>
    <property type="project" value="UniProtKB-SubCell"/>
</dbReference>
<dbReference type="GO" id="GO:0004424">
    <property type="term" value="F:imidazoleglycerol-phosphate dehydratase activity"/>
    <property type="evidence" value="ECO:0007669"/>
    <property type="project" value="UniProtKB-UniRule"/>
</dbReference>
<dbReference type="GO" id="GO:0000105">
    <property type="term" value="P:L-histidine biosynthetic process"/>
    <property type="evidence" value="ECO:0007669"/>
    <property type="project" value="UniProtKB-UniRule"/>
</dbReference>
<dbReference type="CDD" id="cd07914">
    <property type="entry name" value="IGPD"/>
    <property type="match status" value="1"/>
</dbReference>
<dbReference type="FunFam" id="3.30.230.40:FF:000001">
    <property type="entry name" value="Imidazoleglycerol-phosphate dehydratase HisB"/>
    <property type="match status" value="1"/>
</dbReference>
<dbReference type="FunFam" id="3.30.230.40:FF:000003">
    <property type="entry name" value="Imidazoleglycerol-phosphate dehydratase HisB"/>
    <property type="match status" value="1"/>
</dbReference>
<dbReference type="Gene3D" id="3.30.230.40">
    <property type="entry name" value="Imidazole glycerol phosphate dehydratase, domain 1"/>
    <property type="match status" value="2"/>
</dbReference>
<dbReference type="HAMAP" id="MF_00076">
    <property type="entry name" value="HisB"/>
    <property type="match status" value="1"/>
</dbReference>
<dbReference type="InterPro" id="IPR038494">
    <property type="entry name" value="IGPD_sf"/>
</dbReference>
<dbReference type="InterPro" id="IPR000807">
    <property type="entry name" value="ImidazoleglycerolP_deHydtase"/>
</dbReference>
<dbReference type="InterPro" id="IPR020565">
    <property type="entry name" value="ImidazoleglycerP_deHydtase_CS"/>
</dbReference>
<dbReference type="InterPro" id="IPR020568">
    <property type="entry name" value="Ribosomal_Su5_D2-typ_SF"/>
</dbReference>
<dbReference type="NCBIfam" id="NF002109">
    <property type="entry name" value="PRK00951.1-5"/>
    <property type="match status" value="1"/>
</dbReference>
<dbReference type="NCBIfam" id="NF002111">
    <property type="entry name" value="PRK00951.2-1"/>
    <property type="match status" value="1"/>
</dbReference>
<dbReference type="NCBIfam" id="NF002114">
    <property type="entry name" value="PRK00951.2-4"/>
    <property type="match status" value="1"/>
</dbReference>
<dbReference type="PANTHER" id="PTHR23133:SF2">
    <property type="entry name" value="IMIDAZOLEGLYCEROL-PHOSPHATE DEHYDRATASE"/>
    <property type="match status" value="1"/>
</dbReference>
<dbReference type="PANTHER" id="PTHR23133">
    <property type="entry name" value="IMIDAZOLEGLYCEROL-PHOSPHATE DEHYDRATASE HIS7"/>
    <property type="match status" value="1"/>
</dbReference>
<dbReference type="Pfam" id="PF00475">
    <property type="entry name" value="IGPD"/>
    <property type="match status" value="1"/>
</dbReference>
<dbReference type="SUPFAM" id="SSF54211">
    <property type="entry name" value="Ribosomal protein S5 domain 2-like"/>
    <property type="match status" value="2"/>
</dbReference>
<dbReference type="PROSITE" id="PS00954">
    <property type="entry name" value="IGP_DEHYDRATASE_1"/>
    <property type="match status" value="1"/>
</dbReference>
<dbReference type="PROSITE" id="PS00955">
    <property type="entry name" value="IGP_DEHYDRATASE_2"/>
    <property type="match status" value="1"/>
</dbReference>
<proteinExistence type="inferred from homology"/>
<gene>
    <name evidence="1" type="primary">hisB</name>
    <name type="ordered locus">RPA0309</name>
</gene>
<organism>
    <name type="scientific">Rhodopseudomonas palustris (strain ATCC BAA-98 / CGA009)</name>
    <dbReference type="NCBI Taxonomy" id="258594"/>
    <lineage>
        <taxon>Bacteria</taxon>
        <taxon>Pseudomonadati</taxon>
        <taxon>Pseudomonadota</taxon>
        <taxon>Alphaproteobacteria</taxon>
        <taxon>Hyphomicrobiales</taxon>
        <taxon>Nitrobacteraceae</taxon>
        <taxon>Rhodopseudomonas</taxon>
    </lineage>
</organism>
<sequence>MRTATIKRKTKETDIEVTVDLDGTGVANAATGIGFFDHMLDLLAKHSRIDITVKAVGDLHVDFHHTTEDVGIALGQAVKQALGNMAGITRYATVLMPMDETLTRVVIDVSGRPFLVFKADFPRDKIGEFDTELVREWFQAFAMNAGVTLHVETLYGENSHHIAESCFKGLARALRAAVAIDPKTAGEVPSTKGQLGG</sequence>
<protein>
    <recommendedName>
        <fullName evidence="1">Imidazoleglycerol-phosphate dehydratase</fullName>
        <shortName evidence="1">IGPD</shortName>
        <ecNumber evidence="1">4.2.1.19</ecNumber>
    </recommendedName>
</protein>
<feature type="chain" id="PRO_0000158163" description="Imidazoleglycerol-phosphate dehydratase">
    <location>
        <begin position="1"/>
        <end position="197"/>
    </location>
</feature>
<reference key="1">
    <citation type="journal article" date="2004" name="Nat. Biotechnol.">
        <title>Complete genome sequence of the metabolically versatile photosynthetic bacterium Rhodopseudomonas palustris.</title>
        <authorList>
            <person name="Larimer F.W."/>
            <person name="Chain P."/>
            <person name="Hauser L."/>
            <person name="Lamerdin J.E."/>
            <person name="Malfatti S."/>
            <person name="Do L."/>
            <person name="Land M.L."/>
            <person name="Pelletier D.A."/>
            <person name="Beatty J.T."/>
            <person name="Lang A.S."/>
            <person name="Tabita F.R."/>
            <person name="Gibson J.L."/>
            <person name="Hanson T.E."/>
            <person name="Bobst C."/>
            <person name="Torres y Torres J.L."/>
            <person name="Peres C."/>
            <person name="Harrison F.H."/>
            <person name="Gibson J."/>
            <person name="Harwood C.S."/>
        </authorList>
    </citation>
    <scope>NUCLEOTIDE SEQUENCE [LARGE SCALE GENOMIC DNA]</scope>
    <source>
        <strain>ATCC BAA-98 / CGA009</strain>
    </source>
</reference>
<comment type="catalytic activity">
    <reaction evidence="1">
        <text>D-erythro-1-(imidazol-4-yl)glycerol 3-phosphate = 3-(imidazol-4-yl)-2-oxopropyl phosphate + H2O</text>
        <dbReference type="Rhea" id="RHEA:11040"/>
        <dbReference type="ChEBI" id="CHEBI:15377"/>
        <dbReference type="ChEBI" id="CHEBI:57766"/>
        <dbReference type="ChEBI" id="CHEBI:58278"/>
        <dbReference type="EC" id="4.2.1.19"/>
    </reaction>
</comment>
<comment type="pathway">
    <text evidence="1">Amino-acid biosynthesis; L-histidine biosynthesis; L-histidine from 5-phospho-alpha-D-ribose 1-diphosphate: step 6/9.</text>
</comment>
<comment type="subcellular location">
    <subcellularLocation>
        <location evidence="1">Cytoplasm</location>
    </subcellularLocation>
</comment>
<comment type="similarity">
    <text evidence="1">Belongs to the imidazoleglycerol-phosphate dehydratase family.</text>
</comment>
<keyword id="KW-0028">Amino-acid biosynthesis</keyword>
<keyword id="KW-0963">Cytoplasm</keyword>
<keyword id="KW-0368">Histidine biosynthesis</keyword>
<keyword id="KW-0456">Lyase</keyword>
<evidence type="ECO:0000255" key="1">
    <source>
        <dbReference type="HAMAP-Rule" id="MF_00076"/>
    </source>
</evidence>
<name>HIS7_RHOPA</name>
<accession>P60887</accession>